<evidence type="ECO:0000255" key="1">
    <source>
        <dbReference type="HAMAP-Rule" id="MF_01151"/>
    </source>
</evidence>
<evidence type="ECO:0000256" key="2">
    <source>
        <dbReference type="SAM" id="MobiDB-lite"/>
    </source>
</evidence>
<dbReference type="EMBL" id="AE000513">
    <property type="protein sequence ID" value="AAF09717.1"/>
    <property type="molecule type" value="Genomic_DNA"/>
</dbReference>
<dbReference type="PIR" id="H75556">
    <property type="entry name" value="H75556"/>
</dbReference>
<dbReference type="RefSeq" id="NP_293854.1">
    <property type="nucleotide sequence ID" value="NC_001263.1"/>
</dbReference>
<dbReference type="SMR" id="Q9RY24"/>
<dbReference type="FunCoup" id="Q9RY24">
    <property type="interactions" value="428"/>
</dbReference>
<dbReference type="STRING" id="243230.DR_0128"/>
<dbReference type="PaxDb" id="243230-DR_0128"/>
<dbReference type="EnsemblBacteria" id="AAF09717">
    <property type="protein sequence ID" value="AAF09717"/>
    <property type="gene ID" value="DR_0128"/>
</dbReference>
<dbReference type="KEGG" id="dra:DR_0128"/>
<dbReference type="PATRIC" id="fig|243230.17.peg.292"/>
<dbReference type="eggNOG" id="COG0576">
    <property type="taxonomic scope" value="Bacteria"/>
</dbReference>
<dbReference type="HOGENOM" id="CLU_057217_5_2_0"/>
<dbReference type="InParanoid" id="Q9RY24"/>
<dbReference type="OrthoDB" id="9812586at2"/>
<dbReference type="Proteomes" id="UP000002524">
    <property type="component" value="Chromosome 1"/>
</dbReference>
<dbReference type="GO" id="GO:0005737">
    <property type="term" value="C:cytoplasm"/>
    <property type="evidence" value="ECO:0007669"/>
    <property type="project" value="UniProtKB-SubCell"/>
</dbReference>
<dbReference type="GO" id="GO:0000774">
    <property type="term" value="F:adenyl-nucleotide exchange factor activity"/>
    <property type="evidence" value="ECO:0000318"/>
    <property type="project" value="GO_Central"/>
</dbReference>
<dbReference type="GO" id="GO:0042803">
    <property type="term" value="F:protein homodimerization activity"/>
    <property type="evidence" value="ECO:0007669"/>
    <property type="project" value="InterPro"/>
</dbReference>
<dbReference type="GO" id="GO:0051087">
    <property type="term" value="F:protein-folding chaperone binding"/>
    <property type="evidence" value="ECO:0007669"/>
    <property type="project" value="InterPro"/>
</dbReference>
<dbReference type="GO" id="GO:0051082">
    <property type="term" value="F:unfolded protein binding"/>
    <property type="evidence" value="ECO:0000318"/>
    <property type="project" value="GO_Central"/>
</dbReference>
<dbReference type="GO" id="GO:0006457">
    <property type="term" value="P:protein folding"/>
    <property type="evidence" value="ECO:0007669"/>
    <property type="project" value="InterPro"/>
</dbReference>
<dbReference type="CDD" id="cd00446">
    <property type="entry name" value="GrpE"/>
    <property type="match status" value="1"/>
</dbReference>
<dbReference type="FunFam" id="3.90.20.20:FF:000010">
    <property type="entry name" value="Protein GrpE"/>
    <property type="match status" value="1"/>
</dbReference>
<dbReference type="Gene3D" id="3.90.20.20">
    <property type="match status" value="1"/>
</dbReference>
<dbReference type="Gene3D" id="2.30.22.10">
    <property type="entry name" value="Head domain of nucleotide exchange factor GrpE"/>
    <property type="match status" value="1"/>
</dbReference>
<dbReference type="HAMAP" id="MF_01151">
    <property type="entry name" value="GrpE"/>
    <property type="match status" value="1"/>
</dbReference>
<dbReference type="InterPro" id="IPR000740">
    <property type="entry name" value="GrpE"/>
</dbReference>
<dbReference type="InterPro" id="IPR013805">
    <property type="entry name" value="GrpE_coiled_coil"/>
</dbReference>
<dbReference type="InterPro" id="IPR009012">
    <property type="entry name" value="GrpE_head"/>
</dbReference>
<dbReference type="PANTHER" id="PTHR21237">
    <property type="entry name" value="GRPE PROTEIN"/>
    <property type="match status" value="1"/>
</dbReference>
<dbReference type="PANTHER" id="PTHR21237:SF23">
    <property type="entry name" value="GRPE PROTEIN HOMOLOG, MITOCHONDRIAL"/>
    <property type="match status" value="1"/>
</dbReference>
<dbReference type="Pfam" id="PF01025">
    <property type="entry name" value="GrpE"/>
    <property type="match status" value="1"/>
</dbReference>
<dbReference type="PRINTS" id="PR00773">
    <property type="entry name" value="GRPEPROTEIN"/>
</dbReference>
<dbReference type="SUPFAM" id="SSF58014">
    <property type="entry name" value="Coiled-coil domain of nucleotide exchange factor GrpE"/>
    <property type="match status" value="1"/>
</dbReference>
<dbReference type="SUPFAM" id="SSF51064">
    <property type="entry name" value="Head domain of nucleotide exchange factor GrpE"/>
    <property type="match status" value="1"/>
</dbReference>
<dbReference type="PROSITE" id="PS01071">
    <property type="entry name" value="GRPE"/>
    <property type="match status" value="1"/>
</dbReference>
<comment type="function">
    <text evidence="1">Participates actively in the response to hyperosmotic and heat shock by preventing the aggregation of stress-denatured proteins, in association with DnaK and GrpE. It is the nucleotide exchange factor for DnaK and may function as a thermosensor. Unfolded proteins bind initially to DnaJ; upon interaction with the DnaJ-bound protein, DnaK hydrolyzes its bound ATP, resulting in the formation of a stable complex. GrpE releases ADP from DnaK; ATP binding to DnaK triggers the release of the substrate protein, thus completing the reaction cycle. Several rounds of ATP-dependent interactions between DnaJ, DnaK and GrpE are required for fully efficient folding.</text>
</comment>
<comment type="subunit">
    <text evidence="1">Homodimer.</text>
</comment>
<comment type="subcellular location">
    <subcellularLocation>
        <location evidence="1">Cytoplasm</location>
    </subcellularLocation>
</comment>
<comment type="similarity">
    <text evidence="1">Belongs to the GrpE family.</text>
</comment>
<keyword id="KW-0143">Chaperone</keyword>
<keyword id="KW-0963">Cytoplasm</keyword>
<keyword id="KW-1185">Reference proteome</keyword>
<keyword id="KW-0346">Stress response</keyword>
<name>GRPE_DEIRA</name>
<protein>
    <recommendedName>
        <fullName evidence="1">Protein GrpE</fullName>
    </recommendedName>
    <alternativeName>
        <fullName evidence="1">HSP-70 cofactor</fullName>
    </alternativeName>
</protein>
<proteinExistence type="inferred from homology"/>
<reference key="1">
    <citation type="journal article" date="1999" name="Science">
        <title>Genome sequence of the radioresistant bacterium Deinococcus radiodurans R1.</title>
        <authorList>
            <person name="White O."/>
            <person name="Eisen J.A."/>
            <person name="Heidelberg J.F."/>
            <person name="Hickey E.K."/>
            <person name="Peterson J.D."/>
            <person name="Dodson R.J."/>
            <person name="Haft D.H."/>
            <person name="Gwinn M.L."/>
            <person name="Nelson W.C."/>
            <person name="Richardson D.L."/>
            <person name="Moffat K.S."/>
            <person name="Qin H."/>
            <person name="Jiang L."/>
            <person name="Pamphile W."/>
            <person name="Crosby M."/>
            <person name="Shen M."/>
            <person name="Vamathevan J.J."/>
            <person name="Lam P."/>
            <person name="McDonald L.A."/>
            <person name="Utterback T.R."/>
            <person name="Zalewski C."/>
            <person name="Makarova K.S."/>
            <person name="Aravind L."/>
            <person name="Daly M.J."/>
            <person name="Minton K.W."/>
            <person name="Fleischmann R.D."/>
            <person name="Ketchum K.A."/>
            <person name="Nelson K.E."/>
            <person name="Salzberg S.L."/>
            <person name="Smith H.O."/>
            <person name="Venter J.C."/>
            <person name="Fraser C.M."/>
        </authorList>
    </citation>
    <scope>NUCLEOTIDE SEQUENCE [LARGE SCALE GENOMIC DNA]</scope>
    <source>
        <strain>ATCC 13939 / DSM 20539 / JCM 16871 / CCUG 27074 / LMG 4051 / NBRC 15346 / NCIMB 9279 / VKM B-1422 / R1</strain>
    </source>
</reference>
<organism>
    <name type="scientific">Deinococcus radiodurans (strain ATCC 13939 / DSM 20539 / JCM 16871 / CCUG 27074 / LMG 4051 / NBRC 15346 / NCIMB 9279 / VKM B-1422 / R1)</name>
    <dbReference type="NCBI Taxonomy" id="243230"/>
    <lineage>
        <taxon>Bacteria</taxon>
        <taxon>Thermotogati</taxon>
        <taxon>Deinococcota</taxon>
        <taxon>Deinococci</taxon>
        <taxon>Deinococcales</taxon>
        <taxon>Deinococcaceae</taxon>
        <taxon>Deinococcus</taxon>
    </lineage>
</organism>
<sequence>MFTNPFGRKKDMSDDQKKNNQPDTEADNAENIKFAADDTELRAGDETDADFEMPEGFPEMDENMFGQVQEMMAKLERVDELEKENADLKNRLGRLASDFEGYRNRTTIESAEAHDKGVSKAAEALMPVYDDIDRALSLSVDDAAKLVPGMQAVQNKVLTIFGTLGLEATGREGEQFDPQWHEAIQVVAGDEDEKIVQTYQLGFKMGDRLVRPARVVVSRKG</sequence>
<gene>
    <name evidence="1" type="primary">grpE</name>
    <name type="ordered locus">DR_0128</name>
</gene>
<accession>Q9RY24</accession>
<feature type="chain" id="PRO_0000113780" description="Protein GrpE">
    <location>
        <begin position="1"/>
        <end position="221"/>
    </location>
</feature>
<feature type="region of interest" description="Disordered" evidence="2">
    <location>
        <begin position="1"/>
        <end position="43"/>
    </location>
</feature>
<feature type="compositionally biased region" description="Basic and acidic residues" evidence="2">
    <location>
        <begin position="8"/>
        <end position="20"/>
    </location>
</feature>